<protein>
    <recommendedName>
        <fullName>Cuticle protein 36</fullName>
    </recommendedName>
    <alternativeName>
        <fullName>LM-ACP 36</fullName>
        <shortName>LM-36</shortName>
    </alternativeName>
</protein>
<organism>
    <name type="scientific">Locusta migratoria</name>
    <name type="common">Migratory locust</name>
    <dbReference type="NCBI Taxonomy" id="7004"/>
    <lineage>
        <taxon>Eukaryota</taxon>
        <taxon>Metazoa</taxon>
        <taxon>Ecdysozoa</taxon>
        <taxon>Arthropoda</taxon>
        <taxon>Hexapoda</taxon>
        <taxon>Insecta</taxon>
        <taxon>Pterygota</taxon>
        <taxon>Neoptera</taxon>
        <taxon>Polyneoptera</taxon>
        <taxon>Orthoptera</taxon>
        <taxon>Caelifera</taxon>
        <taxon>Acrididea</taxon>
        <taxon>Acridomorpha</taxon>
        <taxon>Acridoidea</taxon>
        <taxon>Acrididae</taxon>
        <taxon>Oedipodinae</taxon>
        <taxon>Locusta</taxon>
    </lineage>
</organism>
<comment type="function">
    <text>Component of the cuticle of migratory locust which contains more than 100 different structural proteins.</text>
</comment>
<proteinExistence type="evidence at protein level"/>
<name>CU36_LOCMI</name>
<dbReference type="PIR" id="D24802">
    <property type="entry name" value="D24802"/>
</dbReference>
<dbReference type="GO" id="GO:0042302">
    <property type="term" value="F:structural constituent of cuticle"/>
    <property type="evidence" value="ECO:0007669"/>
    <property type="project" value="UniProtKB-KW"/>
</dbReference>
<reference key="1">
    <citation type="journal article" date="1986" name="Eur. J. Biochem.">
        <title>Isolation, characterization, and N-terminal sequence studies of cuticular proteins from the migratory locust, Locusta migratoria.</title>
        <authorList>
            <person name="Hoejrup P."/>
            <person name="Andersen S.O."/>
            <person name="Roepstorff P."/>
        </authorList>
    </citation>
    <scope>PROTEIN SEQUENCE</scope>
</reference>
<keyword id="KW-0193">Cuticle</keyword>
<keyword id="KW-0903">Direct protein sequencing</keyword>
<sequence>GGPAAYSXYXNGADFGAVGEXLGSXSKGL</sequence>
<accession>P11737</accession>
<feature type="chain" id="PRO_0000196104" description="Cuticle protein 36">
    <location>
        <begin position="1" status="less than"/>
        <end position="29" status="greater than"/>
    </location>
</feature>
<feature type="non-terminal residue">
    <location>
        <position position="1"/>
    </location>
</feature>
<feature type="non-terminal residue">
    <location>
        <position position="29"/>
    </location>
</feature>